<accession>Q6GHJ7</accession>
<name>RS16_STAAR</name>
<dbReference type="EMBL" id="BX571856">
    <property type="protein sequence ID" value="CAG40216.1"/>
    <property type="molecule type" value="Genomic_DNA"/>
</dbReference>
<dbReference type="RefSeq" id="WP_000268754.1">
    <property type="nucleotide sequence ID" value="NC_002952.2"/>
</dbReference>
<dbReference type="SMR" id="Q6GHJ7"/>
<dbReference type="GeneID" id="66839430"/>
<dbReference type="KEGG" id="sar:SAR1214"/>
<dbReference type="HOGENOM" id="CLU_100590_5_0_9"/>
<dbReference type="Proteomes" id="UP000000596">
    <property type="component" value="Chromosome"/>
</dbReference>
<dbReference type="GO" id="GO:0005737">
    <property type="term" value="C:cytoplasm"/>
    <property type="evidence" value="ECO:0007669"/>
    <property type="project" value="UniProtKB-ARBA"/>
</dbReference>
<dbReference type="GO" id="GO:0015935">
    <property type="term" value="C:small ribosomal subunit"/>
    <property type="evidence" value="ECO:0007669"/>
    <property type="project" value="TreeGrafter"/>
</dbReference>
<dbReference type="GO" id="GO:0003735">
    <property type="term" value="F:structural constituent of ribosome"/>
    <property type="evidence" value="ECO:0007669"/>
    <property type="project" value="InterPro"/>
</dbReference>
<dbReference type="GO" id="GO:0006412">
    <property type="term" value="P:translation"/>
    <property type="evidence" value="ECO:0007669"/>
    <property type="project" value="UniProtKB-UniRule"/>
</dbReference>
<dbReference type="FunFam" id="3.30.1320.10:FF:000002">
    <property type="entry name" value="30S ribosomal protein S16"/>
    <property type="match status" value="1"/>
</dbReference>
<dbReference type="Gene3D" id="3.30.1320.10">
    <property type="match status" value="1"/>
</dbReference>
<dbReference type="HAMAP" id="MF_00385">
    <property type="entry name" value="Ribosomal_bS16"/>
    <property type="match status" value="1"/>
</dbReference>
<dbReference type="InterPro" id="IPR000307">
    <property type="entry name" value="Ribosomal_bS16"/>
</dbReference>
<dbReference type="InterPro" id="IPR023803">
    <property type="entry name" value="Ribosomal_bS16_dom_sf"/>
</dbReference>
<dbReference type="NCBIfam" id="TIGR00002">
    <property type="entry name" value="S16"/>
    <property type="match status" value="1"/>
</dbReference>
<dbReference type="PANTHER" id="PTHR12919">
    <property type="entry name" value="30S RIBOSOMAL PROTEIN S16"/>
    <property type="match status" value="1"/>
</dbReference>
<dbReference type="PANTHER" id="PTHR12919:SF20">
    <property type="entry name" value="SMALL RIBOSOMAL SUBUNIT PROTEIN BS16M"/>
    <property type="match status" value="1"/>
</dbReference>
<dbReference type="Pfam" id="PF00886">
    <property type="entry name" value="Ribosomal_S16"/>
    <property type="match status" value="1"/>
</dbReference>
<dbReference type="SUPFAM" id="SSF54565">
    <property type="entry name" value="Ribosomal protein S16"/>
    <property type="match status" value="1"/>
</dbReference>
<reference key="1">
    <citation type="journal article" date="2004" name="Proc. Natl. Acad. Sci. U.S.A.">
        <title>Complete genomes of two clinical Staphylococcus aureus strains: evidence for the rapid evolution of virulence and drug resistance.</title>
        <authorList>
            <person name="Holden M.T.G."/>
            <person name="Feil E.J."/>
            <person name="Lindsay J.A."/>
            <person name="Peacock S.J."/>
            <person name="Day N.P.J."/>
            <person name="Enright M.C."/>
            <person name="Foster T.J."/>
            <person name="Moore C.E."/>
            <person name="Hurst L."/>
            <person name="Atkin R."/>
            <person name="Barron A."/>
            <person name="Bason N."/>
            <person name="Bentley S.D."/>
            <person name="Chillingworth C."/>
            <person name="Chillingworth T."/>
            <person name="Churcher C."/>
            <person name="Clark L."/>
            <person name="Corton C."/>
            <person name="Cronin A."/>
            <person name="Doggett J."/>
            <person name="Dowd L."/>
            <person name="Feltwell T."/>
            <person name="Hance Z."/>
            <person name="Harris B."/>
            <person name="Hauser H."/>
            <person name="Holroyd S."/>
            <person name="Jagels K."/>
            <person name="James K.D."/>
            <person name="Lennard N."/>
            <person name="Line A."/>
            <person name="Mayes R."/>
            <person name="Moule S."/>
            <person name="Mungall K."/>
            <person name="Ormond D."/>
            <person name="Quail M.A."/>
            <person name="Rabbinowitsch E."/>
            <person name="Rutherford K.M."/>
            <person name="Sanders M."/>
            <person name="Sharp S."/>
            <person name="Simmonds M."/>
            <person name="Stevens K."/>
            <person name="Whitehead S."/>
            <person name="Barrell B.G."/>
            <person name="Spratt B.G."/>
            <person name="Parkhill J."/>
        </authorList>
    </citation>
    <scope>NUCLEOTIDE SEQUENCE [LARGE SCALE GENOMIC DNA]</scope>
    <source>
        <strain>MRSA252</strain>
    </source>
</reference>
<sequence length="91" mass="10235">MAVKIRLTRLGSKRNPFYRIVVADARSPRDGRIIEQIGTYNPTSANAPEIKVDEALALKWLNDGAKPTDTVHNILSKEGIMKKFDEQKKAK</sequence>
<feature type="chain" id="PRO_0000167244" description="Small ribosomal subunit protein bS16">
    <location>
        <begin position="1"/>
        <end position="91"/>
    </location>
</feature>
<protein>
    <recommendedName>
        <fullName evidence="1">Small ribosomal subunit protein bS16</fullName>
    </recommendedName>
    <alternativeName>
        <fullName evidence="2">30S ribosomal protein S16</fullName>
    </alternativeName>
</protein>
<comment type="similarity">
    <text evidence="1">Belongs to the bacterial ribosomal protein bS16 family.</text>
</comment>
<keyword id="KW-0687">Ribonucleoprotein</keyword>
<keyword id="KW-0689">Ribosomal protein</keyword>
<gene>
    <name evidence="1" type="primary">rpsP</name>
    <name type="ordered locus">SAR1214</name>
</gene>
<organism>
    <name type="scientific">Staphylococcus aureus (strain MRSA252)</name>
    <dbReference type="NCBI Taxonomy" id="282458"/>
    <lineage>
        <taxon>Bacteria</taxon>
        <taxon>Bacillati</taxon>
        <taxon>Bacillota</taxon>
        <taxon>Bacilli</taxon>
        <taxon>Bacillales</taxon>
        <taxon>Staphylococcaceae</taxon>
        <taxon>Staphylococcus</taxon>
    </lineage>
</organism>
<proteinExistence type="inferred from homology"/>
<evidence type="ECO:0000255" key="1">
    <source>
        <dbReference type="HAMAP-Rule" id="MF_00385"/>
    </source>
</evidence>
<evidence type="ECO:0000305" key="2"/>